<sequence length="183" mass="21279">MKQKYEDWLNDVPDNQEDDEDDEIIWVSKSEIKRDAEALKDLGAELVDLGKNALEKIPLDDDLRAAVELAQRIKKEGRRRQLQLIGKMLRARDPEPIQTALDKLNNRHNQQVALFHKLEQLRDRLIEEGDDVVPDILALYPHADRQQLRSLVRNAQKEKAANKPPKSARQIFQYLRELAETTD</sequence>
<proteinExistence type="inferred from homology"/>
<dbReference type="EMBL" id="CP001657">
    <property type="protein sequence ID" value="ACT11325.1"/>
    <property type="molecule type" value="Genomic_DNA"/>
</dbReference>
<dbReference type="SMR" id="C6DIM5"/>
<dbReference type="STRING" id="561230.PC1_0266"/>
<dbReference type="KEGG" id="pct:PC1_0266"/>
<dbReference type="eggNOG" id="COG3028">
    <property type="taxonomic scope" value="Bacteria"/>
</dbReference>
<dbReference type="HOGENOM" id="CLU_106757_2_0_6"/>
<dbReference type="OrthoDB" id="5293604at2"/>
<dbReference type="Proteomes" id="UP000002736">
    <property type="component" value="Chromosome"/>
</dbReference>
<dbReference type="GO" id="GO:0005829">
    <property type="term" value="C:cytosol"/>
    <property type="evidence" value="ECO:0007669"/>
    <property type="project" value="TreeGrafter"/>
</dbReference>
<dbReference type="GO" id="GO:0043022">
    <property type="term" value="F:ribosome binding"/>
    <property type="evidence" value="ECO:0007669"/>
    <property type="project" value="UniProtKB-UniRule"/>
</dbReference>
<dbReference type="GO" id="GO:0019843">
    <property type="term" value="F:rRNA binding"/>
    <property type="evidence" value="ECO:0007669"/>
    <property type="project" value="UniProtKB-UniRule"/>
</dbReference>
<dbReference type="GO" id="GO:1902626">
    <property type="term" value="P:assembly of large subunit precursor of preribosome"/>
    <property type="evidence" value="ECO:0007669"/>
    <property type="project" value="UniProtKB-UniRule"/>
</dbReference>
<dbReference type="CDD" id="cd16331">
    <property type="entry name" value="YjgA-like"/>
    <property type="match status" value="1"/>
</dbReference>
<dbReference type="FunFam" id="1.10.60.30:FF:000001">
    <property type="entry name" value="UPF0307 protein YjgA"/>
    <property type="match status" value="1"/>
</dbReference>
<dbReference type="FunFam" id="1.10.60.30:FF:000002">
    <property type="entry name" value="UPF0307 protein YjgA"/>
    <property type="match status" value="1"/>
</dbReference>
<dbReference type="Gene3D" id="1.10.60.30">
    <property type="entry name" value="PSPTO4464-like domains"/>
    <property type="match status" value="2"/>
</dbReference>
<dbReference type="HAMAP" id="MF_00765">
    <property type="entry name" value="DarP"/>
    <property type="match status" value="1"/>
</dbReference>
<dbReference type="InterPro" id="IPR006839">
    <property type="entry name" value="DarP"/>
</dbReference>
<dbReference type="InterPro" id="IPR023153">
    <property type="entry name" value="DarP_sf"/>
</dbReference>
<dbReference type="NCBIfam" id="NF003593">
    <property type="entry name" value="PRK05255.1-1"/>
    <property type="match status" value="1"/>
</dbReference>
<dbReference type="PANTHER" id="PTHR38101">
    <property type="entry name" value="UPF0307 PROTEIN YJGA"/>
    <property type="match status" value="1"/>
</dbReference>
<dbReference type="PANTHER" id="PTHR38101:SF1">
    <property type="entry name" value="UPF0307 PROTEIN YJGA"/>
    <property type="match status" value="1"/>
</dbReference>
<dbReference type="Pfam" id="PF04751">
    <property type="entry name" value="DarP"/>
    <property type="match status" value="1"/>
</dbReference>
<dbReference type="PIRSF" id="PIRSF016183">
    <property type="entry name" value="UCP016183"/>
    <property type="match status" value="1"/>
</dbReference>
<dbReference type="SUPFAM" id="SSF158710">
    <property type="entry name" value="PSPTO4464-like"/>
    <property type="match status" value="1"/>
</dbReference>
<reference key="1">
    <citation type="submission" date="2009-07" db="EMBL/GenBank/DDBJ databases">
        <title>Complete sequence of Pectobacterium carotovorum subsp. carotovorum PC1.</title>
        <authorList>
            <consortium name="US DOE Joint Genome Institute"/>
            <person name="Lucas S."/>
            <person name="Copeland A."/>
            <person name="Lapidus A."/>
            <person name="Glavina del Rio T."/>
            <person name="Tice H."/>
            <person name="Bruce D."/>
            <person name="Goodwin L."/>
            <person name="Pitluck S."/>
            <person name="Munk A.C."/>
            <person name="Brettin T."/>
            <person name="Detter J.C."/>
            <person name="Han C."/>
            <person name="Tapia R."/>
            <person name="Larimer F."/>
            <person name="Land M."/>
            <person name="Hauser L."/>
            <person name="Kyrpides N."/>
            <person name="Mikhailova N."/>
            <person name="Balakrishnan V."/>
            <person name="Glasner J."/>
            <person name="Perna N.T."/>
        </authorList>
    </citation>
    <scope>NUCLEOTIDE SEQUENCE [LARGE SCALE GENOMIC DNA]</scope>
    <source>
        <strain>PC1</strain>
    </source>
</reference>
<accession>C6DIM5</accession>
<keyword id="KW-0963">Cytoplasm</keyword>
<keyword id="KW-0690">Ribosome biogenesis</keyword>
<keyword id="KW-0694">RNA-binding</keyword>
<keyword id="KW-0699">rRNA-binding</keyword>
<name>DARP_PECCP</name>
<evidence type="ECO:0000255" key="1">
    <source>
        <dbReference type="HAMAP-Rule" id="MF_00765"/>
    </source>
</evidence>
<evidence type="ECO:0000256" key="2">
    <source>
        <dbReference type="SAM" id="MobiDB-lite"/>
    </source>
</evidence>
<comment type="function">
    <text evidence="1">Member of a network of 50S ribosomal subunit biogenesis factors which assembles along the 30S-50S interface, preventing incorrect 23S rRNA structures from forming. Promotes peptidyl transferase center (PTC) maturation.</text>
</comment>
<comment type="subcellular location">
    <subcellularLocation>
        <location evidence="1">Cytoplasm</location>
    </subcellularLocation>
    <text evidence="1">Associates with late stage pre-50S ribosomal subunits.</text>
</comment>
<comment type="similarity">
    <text evidence="1">Belongs to the DarP family.</text>
</comment>
<gene>
    <name evidence="1" type="primary">darP</name>
    <name type="ordered locus">PC1_0266</name>
</gene>
<feature type="chain" id="PRO_1000212890" description="Dual-action ribosomal maturation protein DarP">
    <location>
        <begin position="1"/>
        <end position="183"/>
    </location>
</feature>
<feature type="region of interest" description="Disordered" evidence="2">
    <location>
        <begin position="1"/>
        <end position="20"/>
    </location>
</feature>
<organism>
    <name type="scientific">Pectobacterium carotovorum subsp. carotovorum (strain PC1)</name>
    <dbReference type="NCBI Taxonomy" id="561230"/>
    <lineage>
        <taxon>Bacteria</taxon>
        <taxon>Pseudomonadati</taxon>
        <taxon>Pseudomonadota</taxon>
        <taxon>Gammaproteobacteria</taxon>
        <taxon>Enterobacterales</taxon>
        <taxon>Pectobacteriaceae</taxon>
        <taxon>Pectobacterium</taxon>
    </lineage>
</organism>
<protein>
    <recommendedName>
        <fullName evidence="1">Dual-action ribosomal maturation protein DarP</fullName>
    </recommendedName>
    <alternativeName>
        <fullName evidence="1">Large ribosomal subunit assembly factor DarP</fullName>
    </alternativeName>
</protein>